<protein>
    <recommendedName>
        <fullName>Interleukin-1 alpha</fullName>
        <shortName>IL-1 alpha</shortName>
    </recommendedName>
</protein>
<evidence type="ECO:0000250" key="1"/>
<evidence type="ECO:0000250" key="2">
    <source>
        <dbReference type="UniProtKB" id="P01582"/>
    </source>
</evidence>
<evidence type="ECO:0000250" key="3">
    <source>
        <dbReference type="UniProtKB" id="P01583"/>
    </source>
</evidence>
<evidence type="ECO:0000255" key="4"/>
<evidence type="ECO:0000305" key="5"/>
<proteinExistence type="evidence at transcript level"/>
<sequence length="265" mass="30522">MAKVPDLFEDLKNCYSENEEYSSEIDHLSLNQKSFYDMSCDPLHEDCMSLSTSEISKTSQLTFKENVVVVAANGKILKKRRLSLSQFITDDDLEGIANDTEEVIMKPRSVAYNFHNNEKYNYIRIIKSQFILNDNLNQSIVRQTGGNYLMTAALQNLDDAVKFDMGAYTSEDSKLPVTLRISKTRLFVSAQNEDEPVLLKEMPETPKTIRDETNLLFFWERHGSKHYFKSVAQPKLFIATQERKLVHMARGQPSITDFRLLETQP</sequence>
<reference key="1">
    <citation type="journal article" date="1999" name="Gene">
        <title>Identification of two transcripts of canine, feline, and porcine interleukin-1 alpha.</title>
        <authorList>
            <person name="Straubinger A.F."/>
            <person name="Viveiros M.M."/>
            <person name="Straubinger R.K."/>
        </authorList>
    </citation>
    <scope>NUCLEOTIDE SEQUENCE [MRNA]</scope>
</reference>
<reference key="2">
    <citation type="submission" date="2006-08" db="EMBL/GenBank/DDBJ databases">
        <title>Cytokine gene single nucleotide polymorphism (SNP) screening analyses in canine malignant histiocytosis.</title>
        <authorList>
            <person name="Soller J.T."/>
            <person name="Murua Escobar H."/>
            <person name="Janssen M."/>
            <person name="Fork M."/>
            <person name="Bullerdiek J."/>
            <person name="Nolte I."/>
        </authorList>
    </citation>
    <scope>NUCLEOTIDE SEQUENCE [MRNA]</scope>
</reference>
<gene>
    <name type="primary">IL1A</name>
</gene>
<feature type="propeptide" id="PRO_0000015253" evidence="1">
    <location>
        <begin position="1"/>
        <end position="108"/>
    </location>
</feature>
<feature type="chain" id="PRO_0000015254" description="Interleukin-1 alpha">
    <location>
        <begin position="109"/>
        <end position="265"/>
    </location>
</feature>
<feature type="region of interest" description="Nuclear localization signal (NLS)" evidence="3">
    <location>
        <begin position="78"/>
        <end position="82"/>
    </location>
</feature>
<feature type="modified residue" description="N6-acetyllysine" evidence="3">
    <location>
        <position position="78"/>
    </location>
</feature>
<feature type="modified residue" description="Phosphoserine" evidence="2">
    <location>
        <position position="83"/>
    </location>
</feature>
<feature type="glycosylation site" description="N-linked (GlcNAc...) asparagine" evidence="4">
    <location>
        <position position="98"/>
    </location>
</feature>
<feature type="glycosylation site" description="N-linked (GlcNAc...) asparagine" evidence="4">
    <location>
        <position position="137"/>
    </location>
</feature>
<feature type="sequence conflict" description="In Ref. 2; ABJ51907." evidence="5" ref="2">
    <original>G</original>
    <variation>D</variation>
    <location>
        <position position="95"/>
    </location>
</feature>
<accession>O46612</accession>
<accession>Q006K7</accession>
<keyword id="KW-0007">Acetylation</keyword>
<keyword id="KW-0202">Cytokine</keyword>
<keyword id="KW-0963">Cytoplasm</keyword>
<keyword id="KW-0325">Glycoprotein</keyword>
<keyword id="KW-0395">Inflammatory response</keyword>
<keyword id="KW-0497">Mitogen</keyword>
<keyword id="KW-0539">Nucleus</keyword>
<keyword id="KW-0597">Phosphoprotein</keyword>
<keyword id="KW-0666">Pyrogen</keyword>
<keyword id="KW-1185">Reference proteome</keyword>
<keyword id="KW-0964">Secreted</keyword>
<dbReference type="EMBL" id="AF047011">
    <property type="protein sequence ID" value="AAC03066.1"/>
    <property type="molecule type" value="mRNA"/>
</dbReference>
<dbReference type="EMBL" id="DQ923806">
    <property type="protein sequence ID" value="ABJ51907.1"/>
    <property type="molecule type" value="mRNA"/>
</dbReference>
<dbReference type="RefSeq" id="NP_001003157.2">
    <property type="nucleotide sequence ID" value="NM_001003157.2"/>
</dbReference>
<dbReference type="SMR" id="O46612"/>
<dbReference type="FunCoup" id="O46612">
    <property type="interactions" value="156"/>
</dbReference>
<dbReference type="STRING" id="9615.ENSCAFP00000038305"/>
<dbReference type="GlyCosmos" id="O46612">
    <property type="glycosylation" value="2 sites, No reported glycans"/>
</dbReference>
<dbReference type="PaxDb" id="9612-ENSCAFP00000038305"/>
<dbReference type="GeneID" id="403782"/>
<dbReference type="KEGG" id="cfa:403782"/>
<dbReference type="CTD" id="3552"/>
<dbReference type="eggNOG" id="ENOG502T3DD">
    <property type="taxonomic scope" value="Eukaryota"/>
</dbReference>
<dbReference type="InParanoid" id="O46612"/>
<dbReference type="OrthoDB" id="9451248at2759"/>
<dbReference type="TreeFam" id="TF300203"/>
<dbReference type="Proteomes" id="UP000002254">
    <property type="component" value="Unplaced"/>
</dbReference>
<dbReference type="Proteomes" id="UP000694429">
    <property type="component" value="Unplaced"/>
</dbReference>
<dbReference type="Proteomes" id="UP000694542">
    <property type="component" value="Unplaced"/>
</dbReference>
<dbReference type="Proteomes" id="UP000805418">
    <property type="component" value="Unplaced"/>
</dbReference>
<dbReference type="GO" id="GO:0005829">
    <property type="term" value="C:cytosol"/>
    <property type="evidence" value="ECO:0000250"/>
    <property type="project" value="UniProtKB"/>
</dbReference>
<dbReference type="GO" id="GO:0005615">
    <property type="term" value="C:extracellular space"/>
    <property type="evidence" value="ECO:0000250"/>
    <property type="project" value="UniProtKB"/>
</dbReference>
<dbReference type="GO" id="GO:0005634">
    <property type="term" value="C:nucleus"/>
    <property type="evidence" value="ECO:0007669"/>
    <property type="project" value="UniProtKB-SubCell"/>
</dbReference>
<dbReference type="GO" id="GO:0005507">
    <property type="term" value="F:copper ion binding"/>
    <property type="evidence" value="ECO:0000250"/>
    <property type="project" value="UniProtKB"/>
</dbReference>
<dbReference type="GO" id="GO:0005125">
    <property type="term" value="F:cytokine activity"/>
    <property type="evidence" value="ECO:0000318"/>
    <property type="project" value="GO_Central"/>
</dbReference>
<dbReference type="GO" id="GO:0005149">
    <property type="term" value="F:interleukin-1 receptor binding"/>
    <property type="evidence" value="ECO:0007669"/>
    <property type="project" value="InterPro"/>
</dbReference>
<dbReference type="GO" id="GO:0034605">
    <property type="term" value="P:cellular response to heat"/>
    <property type="evidence" value="ECO:0000250"/>
    <property type="project" value="UniProtKB"/>
</dbReference>
<dbReference type="GO" id="GO:0071222">
    <property type="term" value="P:cellular response to lipopolysaccharide"/>
    <property type="evidence" value="ECO:0000318"/>
    <property type="project" value="GO_Central"/>
</dbReference>
<dbReference type="GO" id="GO:0019221">
    <property type="term" value="P:cytokine-mediated signaling pathway"/>
    <property type="evidence" value="ECO:0000318"/>
    <property type="project" value="GO_Central"/>
</dbReference>
<dbReference type="GO" id="GO:0001660">
    <property type="term" value="P:fever generation"/>
    <property type="evidence" value="ECO:0007669"/>
    <property type="project" value="UniProtKB-KW"/>
</dbReference>
<dbReference type="GO" id="GO:0006955">
    <property type="term" value="P:immune response"/>
    <property type="evidence" value="ECO:0000318"/>
    <property type="project" value="GO_Central"/>
</dbReference>
<dbReference type="GO" id="GO:0006954">
    <property type="term" value="P:inflammatory response"/>
    <property type="evidence" value="ECO:0000318"/>
    <property type="project" value="GO_Central"/>
</dbReference>
<dbReference type="GO" id="GO:0043123">
    <property type="term" value="P:positive regulation of canonical NF-kappaB signal transduction"/>
    <property type="evidence" value="ECO:0000318"/>
    <property type="project" value="GO_Central"/>
</dbReference>
<dbReference type="GO" id="GO:0051781">
    <property type="term" value="P:positive regulation of cell division"/>
    <property type="evidence" value="ECO:0007669"/>
    <property type="project" value="UniProtKB-KW"/>
</dbReference>
<dbReference type="GO" id="GO:0033092">
    <property type="term" value="P:positive regulation of immature T cell proliferation in thymus"/>
    <property type="evidence" value="ECO:0000318"/>
    <property type="project" value="GO_Central"/>
</dbReference>
<dbReference type="GO" id="GO:0070372">
    <property type="term" value="P:regulation of ERK1 and ERK2 cascade"/>
    <property type="evidence" value="ECO:0000318"/>
    <property type="project" value="GO_Central"/>
</dbReference>
<dbReference type="GO" id="GO:0046688">
    <property type="term" value="P:response to copper ion"/>
    <property type="evidence" value="ECO:0000250"/>
    <property type="project" value="UniProtKB"/>
</dbReference>
<dbReference type="CDD" id="cd23295">
    <property type="entry name" value="beta-trefoil_IL1A"/>
    <property type="match status" value="1"/>
</dbReference>
<dbReference type="FunFam" id="2.80.10.50:FF:000049">
    <property type="entry name" value="Interleukin-1 alpha"/>
    <property type="match status" value="1"/>
</dbReference>
<dbReference type="Gene3D" id="2.80.10.50">
    <property type="match status" value="1"/>
</dbReference>
<dbReference type="InterPro" id="IPR003295">
    <property type="entry name" value="IL-1_alpha"/>
</dbReference>
<dbReference type="InterPro" id="IPR020877">
    <property type="entry name" value="IL-1_CS"/>
</dbReference>
<dbReference type="InterPro" id="IPR000975">
    <property type="entry name" value="IL-1_fam"/>
</dbReference>
<dbReference type="InterPro" id="IPR003502">
    <property type="entry name" value="IL-1_propep"/>
</dbReference>
<dbReference type="InterPro" id="IPR008996">
    <property type="entry name" value="IL1/FGF"/>
</dbReference>
<dbReference type="PANTHER" id="PTHR10078:SF33">
    <property type="entry name" value="INTERLEUKIN-1 ALPHA"/>
    <property type="match status" value="1"/>
</dbReference>
<dbReference type="PANTHER" id="PTHR10078">
    <property type="entry name" value="INTERLEUKIN-1 FAMILY MEMBER"/>
    <property type="match status" value="1"/>
</dbReference>
<dbReference type="Pfam" id="PF00340">
    <property type="entry name" value="IL1"/>
    <property type="match status" value="1"/>
</dbReference>
<dbReference type="Pfam" id="PF02394">
    <property type="entry name" value="IL1_propep"/>
    <property type="match status" value="1"/>
</dbReference>
<dbReference type="PRINTS" id="PR00264">
    <property type="entry name" value="INTERLEUKIN1"/>
</dbReference>
<dbReference type="PRINTS" id="PR01358">
    <property type="entry name" value="INTRLEUKIN1A"/>
</dbReference>
<dbReference type="PRINTS" id="PR01357">
    <property type="entry name" value="INTRLEUKN1AB"/>
</dbReference>
<dbReference type="SMART" id="SM00125">
    <property type="entry name" value="IL1"/>
    <property type="match status" value="1"/>
</dbReference>
<dbReference type="SUPFAM" id="SSF50353">
    <property type="entry name" value="Cytokine"/>
    <property type="match status" value="1"/>
</dbReference>
<dbReference type="PROSITE" id="PS00253">
    <property type="entry name" value="INTERLEUKIN_1"/>
    <property type="match status" value="1"/>
</dbReference>
<organism>
    <name type="scientific">Canis lupus familiaris</name>
    <name type="common">Dog</name>
    <name type="synonym">Canis familiaris</name>
    <dbReference type="NCBI Taxonomy" id="9615"/>
    <lineage>
        <taxon>Eukaryota</taxon>
        <taxon>Metazoa</taxon>
        <taxon>Chordata</taxon>
        <taxon>Craniata</taxon>
        <taxon>Vertebrata</taxon>
        <taxon>Euteleostomi</taxon>
        <taxon>Mammalia</taxon>
        <taxon>Eutheria</taxon>
        <taxon>Laurasiatheria</taxon>
        <taxon>Carnivora</taxon>
        <taxon>Caniformia</taxon>
        <taxon>Canidae</taxon>
        <taxon>Canis</taxon>
    </lineage>
</organism>
<name>IL1A_CANLF</name>
<comment type="function">
    <text evidence="3">Cytokine constitutively present intracellularly in nearly all resting non-hematopoietic cells that plays an important role in inflammation and bridges the innate and adaptive immune systems. After binding to its receptor IL1R1 together with its accessory protein IL1RAP, forms the high affinity interleukin-1 receptor complex. Signaling involves the recruitment of adapter molecules such as MYD88, IRAK1 or IRAK4. In turn, mediates the activation of NF-kappa-B and the three MAPK pathways p38, p42/p44 and JNK pathways. Within the cell, acts as an alarmin and cell death results in its liberation in the extracellular space after disruption of the cell membrane to induce inflammation and alert the host to injury or damage. In addition to its role as a danger signal, which occurs when the cytokine is passively released by cell necrosis, directly senses DNA damage and acts as signal for genotoxic stress without loss of cell integrity.</text>
</comment>
<comment type="subunit">
    <text evidence="3">Monomer. Interacts with TMED10; the interaction mediates the translocation from the cytoplasm into the ERGIC (endoplasmic reticulum-Golgi intermediate compartment) and thereby secretion. Interacts with IL1R1. Interacts with S100A13; this interaction is the first step in the export of IL1A, followed by direct translocation of this complex across the plasma membrane.</text>
</comment>
<comment type="subcellular location">
    <subcellularLocation>
        <location evidence="3">Nucleus</location>
    </subcellularLocation>
    <subcellularLocation>
        <location evidence="3">Cytoplasm</location>
    </subcellularLocation>
    <subcellularLocation>
        <location evidence="3">Secreted</location>
    </subcellularLocation>
    <text evidence="3">The lack of a specific hydrophobic segment in the precursor sequence suggests that IL-1 is released by damaged cells or is secreted by a mechanism differing from that used for other secretory proteins. The secretion is dependent on protein unfolding and facilitated by the cargo receptor TMED10; it results in protein translocation from the cytoplasm into the ERGIC (endoplasmic reticulum-Golgi intermediate compartment) followed by vesicle entry and secretion. Recruited to DNA damage sites and secreted after genotoxic stress.</text>
</comment>
<comment type="domain">
    <text>The similarity among the IL-1 precursors suggests that the amino ends of these proteins serve some as yet undefined function.</text>
</comment>
<comment type="PTM">
    <text evidence="3">Acetylated within its nuclear localization sequence, which impacts subcellular localization.</text>
</comment>
<comment type="PTM">
    <text evidence="3">Proteolytic processed by CAPN1 in a calcium-dependent manner. Cleavage from 31 kDa precursor to 18 kDa biologically active molecules.</text>
</comment>
<comment type="PTM">
    <text evidence="3">Phosphorylated. Phosphorylation greatly enhances susceptibility to digestion and promotes the conversion of pre-IL1A alpha to the biologically active IL1A.</text>
</comment>
<comment type="similarity">
    <text evidence="5">Belongs to the IL-1 family.</text>
</comment>